<gene>
    <name evidence="1" type="primary">ispE</name>
    <name type="ordered locus">GTNG_0039</name>
</gene>
<accession>A4IJC2</accession>
<proteinExistence type="inferred from homology"/>
<feature type="chain" id="PRO_1000007852" description="4-diphosphocytidyl-2-C-methyl-D-erythritol kinase">
    <location>
        <begin position="1"/>
        <end position="290"/>
    </location>
</feature>
<feature type="active site" evidence="1">
    <location>
        <position position="10"/>
    </location>
</feature>
<feature type="active site" evidence="1">
    <location>
        <position position="137"/>
    </location>
</feature>
<feature type="binding site" evidence="1">
    <location>
        <begin position="95"/>
        <end position="105"/>
    </location>
    <ligand>
        <name>ATP</name>
        <dbReference type="ChEBI" id="CHEBI:30616"/>
    </ligand>
</feature>
<comment type="function">
    <text evidence="1">Catalyzes the phosphorylation of the position 2 hydroxy group of 4-diphosphocytidyl-2C-methyl-D-erythritol.</text>
</comment>
<comment type="catalytic activity">
    <reaction evidence="1">
        <text>4-CDP-2-C-methyl-D-erythritol + ATP = 4-CDP-2-C-methyl-D-erythritol 2-phosphate + ADP + H(+)</text>
        <dbReference type="Rhea" id="RHEA:18437"/>
        <dbReference type="ChEBI" id="CHEBI:15378"/>
        <dbReference type="ChEBI" id="CHEBI:30616"/>
        <dbReference type="ChEBI" id="CHEBI:57823"/>
        <dbReference type="ChEBI" id="CHEBI:57919"/>
        <dbReference type="ChEBI" id="CHEBI:456216"/>
        <dbReference type="EC" id="2.7.1.148"/>
    </reaction>
</comment>
<comment type="pathway">
    <text evidence="1">Isoprenoid biosynthesis; isopentenyl diphosphate biosynthesis via DXP pathway; isopentenyl diphosphate from 1-deoxy-D-xylulose 5-phosphate: step 3/6.</text>
</comment>
<comment type="similarity">
    <text evidence="1">Belongs to the GHMP kinase family. IspE subfamily.</text>
</comment>
<reference key="1">
    <citation type="journal article" date="2007" name="Proc. Natl. Acad. Sci. U.S.A.">
        <title>Genome and proteome of long-chain alkane degrading Geobacillus thermodenitrificans NG80-2 isolated from a deep-subsurface oil reservoir.</title>
        <authorList>
            <person name="Feng L."/>
            <person name="Wang W."/>
            <person name="Cheng J."/>
            <person name="Ren Y."/>
            <person name="Zhao G."/>
            <person name="Gao C."/>
            <person name="Tang Y."/>
            <person name="Liu X."/>
            <person name="Han W."/>
            <person name="Peng X."/>
            <person name="Liu R."/>
            <person name="Wang L."/>
        </authorList>
    </citation>
    <scope>NUCLEOTIDE SEQUENCE [LARGE SCALE GENOMIC DNA]</scope>
    <source>
        <strain>NG80-2</strain>
    </source>
</reference>
<keyword id="KW-0067">ATP-binding</keyword>
<keyword id="KW-0414">Isoprene biosynthesis</keyword>
<keyword id="KW-0418">Kinase</keyword>
<keyword id="KW-0547">Nucleotide-binding</keyword>
<keyword id="KW-0808">Transferase</keyword>
<organism>
    <name type="scientific">Geobacillus thermodenitrificans (strain NG80-2)</name>
    <dbReference type="NCBI Taxonomy" id="420246"/>
    <lineage>
        <taxon>Bacteria</taxon>
        <taxon>Bacillati</taxon>
        <taxon>Bacillota</taxon>
        <taxon>Bacilli</taxon>
        <taxon>Bacillales</taxon>
        <taxon>Anoxybacillaceae</taxon>
        <taxon>Geobacillus</taxon>
    </lineage>
</organism>
<sequence>MRLSVKAPAKINLSLDVLYKRPDGYHEVKMVMTTIDLADRIELIPLPGEDAIRVVSQNRFVPDDSRNLAYQAAQLLKETFSIREGVAISITKHIPVAAGLAGGSSDAAATLRGLNKLWKLGLSVHELAELGAQIGSDVAFCVYGGTAVATGRGEIITPISSPPPCWVVLAKPPIGVSTAEVYRNLQLEHVNHPDVDAMVGAIEQQDYAAICRSVGNVLEEVTLKKYPEVAHIKEQMRRFGADAVLMSGSGPTVFGLIEHDSRMQRVYNGLRGFCDQVFAVRLLGERHSLD</sequence>
<protein>
    <recommendedName>
        <fullName evidence="1">4-diphosphocytidyl-2-C-methyl-D-erythritol kinase</fullName>
        <shortName evidence="1">CMK</shortName>
        <ecNumber evidence="1">2.7.1.148</ecNumber>
    </recommendedName>
    <alternativeName>
        <fullName evidence="1">4-(cytidine-5'-diphospho)-2-C-methyl-D-erythritol kinase</fullName>
    </alternativeName>
</protein>
<name>ISPE_GEOTN</name>
<evidence type="ECO:0000255" key="1">
    <source>
        <dbReference type="HAMAP-Rule" id="MF_00061"/>
    </source>
</evidence>
<dbReference type="EC" id="2.7.1.148" evidence="1"/>
<dbReference type="EMBL" id="CP000557">
    <property type="protein sequence ID" value="ABO65426.1"/>
    <property type="molecule type" value="Genomic_DNA"/>
</dbReference>
<dbReference type="RefSeq" id="WP_008881686.1">
    <property type="nucleotide sequence ID" value="NC_009328.1"/>
</dbReference>
<dbReference type="SMR" id="A4IJC2"/>
<dbReference type="GeneID" id="87622407"/>
<dbReference type="KEGG" id="gtn:GTNG_0039"/>
<dbReference type="eggNOG" id="COG1947">
    <property type="taxonomic scope" value="Bacteria"/>
</dbReference>
<dbReference type="HOGENOM" id="CLU_053057_1_1_9"/>
<dbReference type="UniPathway" id="UPA00056">
    <property type="reaction ID" value="UER00094"/>
</dbReference>
<dbReference type="Proteomes" id="UP000001578">
    <property type="component" value="Chromosome"/>
</dbReference>
<dbReference type="GO" id="GO:0050515">
    <property type="term" value="F:4-(cytidine 5'-diphospho)-2-C-methyl-D-erythritol kinase activity"/>
    <property type="evidence" value="ECO:0007669"/>
    <property type="project" value="UniProtKB-UniRule"/>
</dbReference>
<dbReference type="GO" id="GO:0005524">
    <property type="term" value="F:ATP binding"/>
    <property type="evidence" value="ECO:0007669"/>
    <property type="project" value="UniProtKB-UniRule"/>
</dbReference>
<dbReference type="GO" id="GO:0019288">
    <property type="term" value="P:isopentenyl diphosphate biosynthetic process, methylerythritol 4-phosphate pathway"/>
    <property type="evidence" value="ECO:0007669"/>
    <property type="project" value="UniProtKB-UniRule"/>
</dbReference>
<dbReference type="GO" id="GO:0016114">
    <property type="term" value="P:terpenoid biosynthetic process"/>
    <property type="evidence" value="ECO:0007669"/>
    <property type="project" value="InterPro"/>
</dbReference>
<dbReference type="FunFam" id="3.30.230.10:FF:000029">
    <property type="entry name" value="4-diphosphocytidyl-2-C-methyl-D-erythritol kinase"/>
    <property type="match status" value="1"/>
</dbReference>
<dbReference type="FunFam" id="3.30.70.890:FF:000006">
    <property type="entry name" value="4-diphosphocytidyl-2-C-methyl-D-erythritol kinase"/>
    <property type="match status" value="1"/>
</dbReference>
<dbReference type="Gene3D" id="3.30.230.10">
    <property type="match status" value="1"/>
</dbReference>
<dbReference type="Gene3D" id="3.30.70.890">
    <property type="entry name" value="GHMP kinase, C-terminal domain"/>
    <property type="match status" value="1"/>
</dbReference>
<dbReference type="HAMAP" id="MF_00061">
    <property type="entry name" value="IspE"/>
    <property type="match status" value="1"/>
</dbReference>
<dbReference type="InterPro" id="IPR013750">
    <property type="entry name" value="GHMP_kinase_C_dom"/>
</dbReference>
<dbReference type="InterPro" id="IPR036554">
    <property type="entry name" value="GHMP_kinase_C_sf"/>
</dbReference>
<dbReference type="InterPro" id="IPR006204">
    <property type="entry name" value="GHMP_kinase_N_dom"/>
</dbReference>
<dbReference type="InterPro" id="IPR004424">
    <property type="entry name" value="IspE"/>
</dbReference>
<dbReference type="InterPro" id="IPR020568">
    <property type="entry name" value="Ribosomal_Su5_D2-typ_SF"/>
</dbReference>
<dbReference type="InterPro" id="IPR014721">
    <property type="entry name" value="Ribsml_uS5_D2-typ_fold_subgr"/>
</dbReference>
<dbReference type="NCBIfam" id="TIGR00154">
    <property type="entry name" value="ispE"/>
    <property type="match status" value="1"/>
</dbReference>
<dbReference type="NCBIfam" id="NF011202">
    <property type="entry name" value="PRK14608.1"/>
    <property type="match status" value="1"/>
</dbReference>
<dbReference type="PANTHER" id="PTHR43527">
    <property type="entry name" value="4-DIPHOSPHOCYTIDYL-2-C-METHYL-D-ERYTHRITOL KINASE, CHLOROPLASTIC"/>
    <property type="match status" value="1"/>
</dbReference>
<dbReference type="PANTHER" id="PTHR43527:SF2">
    <property type="entry name" value="4-DIPHOSPHOCYTIDYL-2-C-METHYL-D-ERYTHRITOL KINASE, CHLOROPLASTIC"/>
    <property type="match status" value="1"/>
</dbReference>
<dbReference type="Pfam" id="PF08544">
    <property type="entry name" value="GHMP_kinases_C"/>
    <property type="match status" value="1"/>
</dbReference>
<dbReference type="Pfam" id="PF00288">
    <property type="entry name" value="GHMP_kinases_N"/>
    <property type="match status" value="1"/>
</dbReference>
<dbReference type="PIRSF" id="PIRSF010376">
    <property type="entry name" value="IspE"/>
    <property type="match status" value="1"/>
</dbReference>
<dbReference type="SUPFAM" id="SSF55060">
    <property type="entry name" value="GHMP Kinase, C-terminal domain"/>
    <property type="match status" value="1"/>
</dbReference>
<dbReference type="SUPFAM" id="SSF54211">
    <property type="entry name" value="Ribosomal protein S5 domain 2-like"/>
    <property type="match status" value="1"/>
</dbReference>